<reference key="1">
    <citation type="submission" date="2005-06" db="EMBL/GenBank/DDBJ databases">
        <title>DNA sequences of macaque genes expressed in brain or testis and its evolutionary implications.</title>
        <authorList>
            <consortium name="International consortium for macaque cDNA sequencing and analysis"/>
        </authorList>
    </citation>
    <scope>NUCLEOTIDE SEQUENCE [LARGE SCALE MRNA]</scope>
    <source>
        <tissue>Testis</tissue>
    </source>
</reference>
<gene>
    <name type="primary">RWDD2A</name>
    <name type="synonym">RWDD2</name>
    <name type="ORF">QtsA-17490</name>
</gene>
<dbReference type="EMBL" id="AB169140">
    <property type="protein sequence ID" value="BAE01233.1"/>
    <property type="molecule type" value="mRNA"/>
</dbReference>
<dbReference type="RefSeq" id="NP_001270257.1">
    <property type="nucleotide sequence ID" value="NM_001283328.1"/>
</dbReference>
<dbReference type="SMR" id="Q4R6P2"/>
<dbReference type="STRING" id="9541.ENSMFAP00000042438"/>
<dbReference type="eggNOG" id="ENOG502QTUP">
    <property type="taxonomic scope" value="Eukaryota"/>
</dbReference>
<dbReference type="Proteomes" id="UP000233100">
    <property type="component" value="Unplaced"/>
</dbReference>
<dbReference type="CDD" id="cd23829">
    <property type="entry name" value="RWD_RWDD2"/>
    <property type="match status" value="1"/>
</dbReference>
<dbReference type="CDD" id="cd24163">
    <property type="entry name" value="RWDD2_C"/>
    <property type="match status" value="1"/>
</dbReference>
<dbReference type="Gene3D" id="3.10.110.10">
    <property type="entry name" value="Ubiquitin Conjugating Enzyme"/>
    <property type="match status" value="1"/>
</dbReference>
<dbReference type="InterPro" id="IPR017359">
    <property type="entry name" value="Phi-like"/>
</dbReference>
<dbReference type="InterPro" id="IPR010541">
    <property type="entry name" value="Prp3_C"/>
</dbReference>
<dbReference type="InterPro" id="IPR006575">
    <property type="entry name" value="RWD_dom"/>
</dbReference>
<dbReference type="InterPro" id="IPR016135">
    <property type="entry name" value="UBQ-conjugating_enzyme/RWD"/>
</dbReference>
<dbReference type="PANTHER" id="PTHR15955">
    <property type="entry name" value="RWD DOMAIN CONTAINING PROTEIN 2"/>
    <property type="match status" value="1"/>
</dbReference>
<dbReference type="PANTHER" id="PTHR15955:SF3">
    <property type="entry name" value="RWD DOMAIN-CONTAINING PROTEIN 2A"/>
    <property type="match status" value="1"/>
</dbReference>
<dbReference type="Pfam" id="PF06544">
    <property type="entry name" value="Prp3_C"/>
    <property type="match status" value="1"/>
</dbReference>
<dbReference type="Pfam" id="PF05773">
    <property type="entry name" value="RWD"/>
    <property type="match status" value="1"/>
</dbReference>
<dbReference type="PIRSF" id="PIRSF038021">
    <property type="entry name" value="UCP038021_RWDD2"/>
    <property type="match status" value="1"/>
</dbReference>
<dbReference type="SMART" id="SM00591">
    <property type="entry name" value="RWD"/>
    <property type="match status" value="1"/>
</dbReference>
<dbReference type="SUPFAM" id="SSF54495">
    <property type="entry name" value="UBC-like"/>
    <property type="match status" value="1"/>
</dbReference>
<dbReference type="PROSITE" id="PS50908">
    <property type="entry name" value="RWD"/>
    <property type="match status" value="1"/>
</dbReference>
<feature type="chain" id="PRO_0000311692" description="RWD domain-containing protein 2A">
    <location>
        <begin position="1"/>
        <end position="292"/>
    </location>
</feature>
<feature type="domain" description="RWD" evidence="1">
    <location>
        <begin position="14"/>
        <end position="134"/>
    </location>
</feature>
<organism>
    <name type="scientific">Macaca fascicularis</name>
    <name type="common">Crab-eating macaque</name>
    <name type="synonym">Cynomolgus monkey</name>
    <dbReference type="NCBI Taxonomy" id="9541"/>
    <lineage>
        <taxon>Eukaryota</taxon>
        <taxon>Metazoa</taxon>
        <taxon>Chordata</taxon>
        <taxon>Craniata</taxon>
        <taxon>Vertebrata</taxon>
        <taxon>Euteleostomi</taxon>
        <taxon>Mammalia</taxon>
        <taxon>Eutheria</taxon>
        <taxon>Euarchontoglires</taxon>
        <taxon>Primates</taxon>
        <taxon>Haplorrhini</taxon>
        <taxon>Catarrhini</taxon>
        <taxon>Cercopithecidae</taxon>
        <taxon>Cercopithecinae</taxon>
        <taxon>Macaca</taxon>
    </lineage>
</organism>
<name>RWD2A_MACFA</name>
<sequence length="292" mass="33866">MSASVKESLQLQLLEMEMLFSMFPNQGEVKLEDVNALTNIKRYLEGTREALPPKIEFVITLQIEEPKVKIDLQVTMPHSYPYVALQLFGRSSELDRHQQLLLNKGLTSYIGTFDPGELCVCAAIQWLQDNSASYFLSRKLVYEPSTQAKPVKNTFLRMWIYSHHIYQQDLRKKILDVGKRLDVTGFCMTGKPGIICVEGFKEHCEEFWHTIRYPNWKHISCKHAESVETEGNGEDLRLFHSFEELLLEAHGDYGLRNDYHMNLGQFLEFLKKHKSEHVFQILFGIESKSSDS</sequence>
<accession>Q4R6P2</accession>
<proteinExistence type="evidence at transcript level"/>
<keyword id="KW-1185">Reference proteome</keyword>
<evidence type="ECO:0000255" key="1">
    <source>
        <dbReference type="PROSITE-ProRule" id="PRU00179"/>
    </source>
</evidence>
<protein>
    <recommendedName>
        <fullName>RWD domain-containing protein 2A</fullName>
    </recommendedName>
</protein>